<organism>
    <name type="scientific">Chaetomium globosum (strain ATCC 6205 / CBS 148.51 / DSM 1962 / NBRC 6347 / NRRL 1970)</name>
    <name type="common">Soil fungus</name>
    <dbReference type="NCBI Taxonomy" id="306901"/>
    <lineage>
        <taxon>Eukaryota</taxon>
        <taxon>Fungi</taxon>
        <taxon>Dikarya</taxon>
        <taxon>Ascomycota</taxon>
        <taxon>Pezizomycotina</taxon>
        <taxon>Sordariomycetes</taxon>
        <taxon>Sordariomycetidae</taxon>
        <taxon>Sordariales</taxon>
        <taxon>Chaetomiaceae</taxon>
        <taxon>Chaetomium</taxon>
    </lineage>
</organism>
<reference key="1">
    <citation type="journal article" date="2015" name="Genome Announc.">
        <title>Draft genome sequence of the cellulolytic fungus Chaetomium globosum.</title>
        <authorList>
            <person name="Cuomo C.A."/>
            <person name="Untereiner W.A."/>
            <person name="Ma L.-J."/>
            <person name="Grabherr M."/>
            <person name="Birren B.W."/>
        </authorList>
    </citation>
    <scope>NUCLEOTIDE SEQUENCE [LARGE SCALE GENOMIC DNA]</scope>
    <source>
        <strain>ATCC 6205 / CBS 148.51 / DSM 1962 / NBRC 6347 / NRRL 1970</strain>
    </source>
</reference>
<protein>
    <recommendedName>
        <fullName evidence="1">Eukaryotic translation initiation factor 3 subunit F</fullName>
        <shortName evidence="1">eIF3f</shortName>
    </recommendedName>
</protein>
<evidence type="ECO:0000255" key="1">
    <source>
        <dbReference type="HAMAP-Rule" id="MF_03005"/>
    </source>
</evidence>
<evidence type="ECO:0000255" key="2">
    <source>
        <dbReference type="PROSITE-ProRule" id="PRU01182"/>
    </source>
</evidence>
<evidence type="ECO:0000256" key="3">
    <source>
        <dbReference type="SAM" id="MobiDB-lite"/>
    </source>
</evidence>
<comment type="function">
    <text evidence="1">Component of the eukaryotic translation initiation factor 3 (eIF-3) complex, which is involved in protein synthesis of a specialized repertoire of mRNAs and, together with other initiation factors, stimulates binding of mRNA and methionyl-tRNAi to the 40S ribosome. The eIF-3 complex specifically targets and initiates translation of a subset of mRNAs involved in cell proliferation.</text>
</comment>
<comment type="subunit">
    <text evidence="1">Component of the eukaryotic translation initiation factor 3 (eIF-3) complex.</text>
</comment>
<comment type="subcellular location">
    <subcellularLocation>
        <location evidence="1">Cytoplasm</location>
    </subcellularLocation>
</comment>
<comment type="similarity">
    <text evidence="1">Belongs to the eIF-3 subunit F family.</text>
</comment>
<keyword id="KW-0963">Cytoplasm</keyword>
<keyword id="KW-0396">Initiation factor</keyword>
<keyword id="KW-0648">Protein biosynthesis</keyword>
<keyword id="KW-1185">Reference proteome</keyword>
<accession>Q2HGJ2</accession>
<name>EIF3F_CHAGB</name>
<sequence length="357" mass="38206">MAVEQEHFVHLARPLAPTSMGFTGSAPLTVHIQPQAVFSVIDHAVRRDTRDTQSTRVIGALVGTRSEDGSEVEVRSTFAIPHTENEDQVEVDVEYQKNMLALTLKASPRETLLGWYTTSHELNSFSALIQNFFASPETGTFPHPAVHLTISTEPGAPIATKAYISAPVAVSPERAAESCLFIEVPHKLLFSDAERAALGTATAAAETEARSAPVISDIETLAQSLESVSDLLERVSGFVGEVLDEERDGSHALGQYLMNALSLAPKVSATQIEADFNNHVQDVLMVSYLANTIRTQIDLAQRLATAPLVGGDKEGGEKGKDGEDGGRGGRGGKRGGGGRGGHRGEPREPREPREPAE</sequence>
<gene>
    <name type="ORF">CHGG_00662</name>
</gene>
<proteinExistence type="inferred from homology"/>
<feature type="chain" id="PRO_0000364327" description="Eukaryotic translation initiation factor 3 subunit F">
    <location>
        <begin position="1"/>
        <end position="357"/>
    </location>
</feature>
<feature type="domain" description="MPN" evidence="2">
    <location>
        <begin position="30"/>
        <end position="169"/>
    </location>
</feature>
<feature type="region of interest" description="Disordered" evidence="3">
    <location>
        <begin position="309"/>
        <end position="357"/>
    </location>
</feature>
<feature type="compositionally biased region" description="Basic and acidic residues" evidence="3">
    <location>
        <begin position="311"/>
        <end position="327"/>
    </location>
</feature>
<feature type="compositionally biased region" description="Basic and acidic residues" evidence="3">
    <location>
        <begin position="342"/>
        <end position="357"/>
    </location>
</feature>
<dbReference type="EMBL" id="CH408029">
    <property type="protein sequence ID" value="EAQ92427.1"/>
    <property type="molecule type" value="Genomic_DNA"/>
</dbReference>
<dbReference type="RefSeq" id="XP_001219883.1">
    <property type="nucleotide sequence ID" value="XM_001219882.1"/>
</dbReference>
<dbReference type="SMR" id="Q2HGJ2"/>
<dbReference type="STRING" id="306901.Q2HGJ2"/>
<dbReference type="GeneID" id="4386693"/>
<dbReference type="VEuPathDB" id="FungiDB:CHGG_00662"/>
<dbReference type="eggNOG" id="KOG2975">
    <property type="taxonomic scope" value="Eukaryota"/>
</dbReference>
<dbReference type="HOGENOM" id="CLU_027018_0_0_1"/>
<dbReference type="InParanoid" id="Q2HGJ2"/>
<dbReference type="OMA" id="EYFVHFH"/>
<dbReference type="OrthoDB" id="25498at2759"/>
<dbReference type="Proteomes" id="UP000001056">
    <property type="component" value="Unassembled WGS sequence"/>
</dbReference>
<dbReference type="GO" id="GO:0016282">
    <property type="term" value="C:eukaryotic 43S preinitiation complex"/>
    <property type="evidence" value="ECO:0007669"/>
    <property type="project" value="UniProtKB-UniRule"/>
</dbReference>
<dbReference type="GO" id="GO:0033290">
    <property type="term" value="C:eukaryotic 48S preinitiation complex"/>
    <property type="evidence" value="ECO:0007669"/>
    <property type="project" value="UniProtKB-UniRule"/>
</dbReference>
<dbReference type="GO" id="GO:0071540">
    <property type="term" value="C:eukaryotic translation initiation factor 3 complex, eIF3e"/>
    <property type="evidence" value="ECO:0007669"/>
    <property type="project" value="EnsemblFungi"/>
</dbReference>
<dbReference type="GO" id="GO:0071541">
    <property type="term" value="C:eukaryotic translation initiation factor 3 complex, eIF3m"/>
    <property type="evidence" value="ECO:0007669"/>
    <property type="project" value="EnsemblFungi"/>
</dbReference>
<dbReference type="GO" id="GO:0008237">
    <property type="term" value="F:metallopeptidase activity"/>
    <property type="evidence" value="ECO:0007669"/>
    <property type="project" value="InterPro"/>
</dbReference>
<dbReference type="GO" id="GO:0003743">
    <property type="term" value="F:translation initiation factor activity"/>
    <property type="evidence" value="ECO:0007669"/>
    <property type="project" value="UniProtKB-UniRule"/>
</dbReference>
<dbReference type="GO" id="GO:0031369">
    <property type="term" value="F:translation initiation factor binding"/>
    <property type="evidence" value="ECO:0007669"/>
    <property type="project" value="InterPro"/>
</dbReference>
<dbReference type="GO" id="GO:0001732">
    <property type="term" value="P:formation of cytoplasmic translation initiation complex"/>
    <property type="evidence" value="ECO:0007669"/>
    <property type="project" value="UniProtKB-UniRule"/>
</dbReference>
<dbReference type="CDD" id="cd08064">
    <property type="entry name" value="MPN_eIF3f"/>
    <property type="match status" value="1"/>
</dbReference>
<dbReference type="Gene3D" id="3.40.140.10">
    <property type="entry name" value="Cytidine Deaminase, domain 2"/>
    <property type="match status" value="1"/>
</dbReference>
<dbReference type="HAMAP" id="MF_03005">
    <property type="entry name" value="eIF3f"/>
    <property type="match status" value="1"/>
</dbReference>
<dbReference type="InterPro" id="IPR027531">
    <property type="entry name" value="eIF3f"/>
</dbReference>
<dbReference type="InterPro" id="IPR024969">
    <property type="entry name" value="EIF3F/CSN6-like_C"/>
</dbReference>
<dbReference type="InterPro" id="IPR000555">
    <property type="entry name" value="JAMM/MPN+_dom"/>
</dbReference>
<dbReference type="InterPro" id="IPR037518">
    <property type="entry name" value="MPN"/>
</dbReference>
<dbReference type="PANTHER" id="PTHR10540:SF6">
    <property type="entry name" value="EUKARYOTIC TRANSLATION INITIATION FACTOR 3 SUBUNIT F"/>
    <property type="match status" value="1"/>
</dbReference>
<dbReference type="PANTHER" id="PTHR10540">
    <property type="entry name" value="EUKARYOTIC TRANSLATION INITIATION FACTOR 3 SUBUNIT F-RELATED"/>
    <property type="match status" value="1"/>
</dbReference>
<dbReference type="Pfam" id="PF01398">
    <property type="entry name" value="JAB"/>
    <property type="match status" value="1"/>
</dbReference>
<dbReference type="Pfam" id="PF13012">
    <property type="entry name" value="MitMem_reg"/>
    <property type="match status" value="1"/>
</dbReference>
<dbReference type="SMART" id="SM00232">
    <property type="entry name" value="JAB_MPN"/>
    <property type="match status" value="1"/>
</dbReference>
<dbReference type="PROSITE" id="PS50249">
    <property type="entry name" value="MPN"/>
    <property type="match status" value="1"/>
</dbReference>